<comment type="function">
    <text evidence="1">Can catalyze the hydrolysis of ATP in the presence of single-stranded DNA, the ATP-dependent uptake of single-stranded DNA by duplex DNA, and the ATP-dependent hybridization of homologous single-stranded DNAs. It interacts with LexA causing its activation and leading to its autocatalytic cleavage.</text>
</comment>
<comment type="subcellular location">
    <subcellularLocation>
        <location evidence="1">Cytoplasm</location>
    </subcellularLocation>
</comment>
<comment type="similarity">
    <text evidence="1">Belongs to the RecA family.</text>
</comment>
<gene>
    <name evidence="1" type="primary">recA</name>
    <name type="ordered locus">lin1435</name>
</gene>
<reference key="1">
    <citation type="journal article" date="2001" name="Science">
        <title>Comparative genomics of Listeria species.</title>
        <authorList>
            <person name="Glaser P."/>
            <person name="Frangeul L."/>
            <person name="Buchrieser C."/>
            <person name="Rusniok C."/>
            <person name="Amend A."/>
            <person name="Baquero F."/>
            <person name="Berche P."/>
            <person name="Bloecker H."/>
            <person name="Brandt P."/>
            <person name="Chakraborty T."/>
            <person name="Charbit A."/>
            <person name="Chetouani F."/>
            <person name="Couve E."/>
            <person name="de Daruvar A."/>
            <person name="Dehoux P."/>
            <person name="Domann E."/>
            <person name="Dominguez-Bernal G."/>
            <person name="Duchaud E."/>
            <person name="Durant L."/>
            <person name="Dussurget O."/>
            <person name="Entian K.-D."/>
            <person name="Fsihi H."/>
            <person name="Garcia-del Portillo F."/>
            <person name="Garrido P."/>
            <person name="Gautier L."/>
            <person name="Goebel W."/>
            <person name="Gomez-Lopez N."/>
            <person name="Hain T."/>
            <person name="Hauf J."/>
            <person name="Jackson D."/>
            <person name="Jones L.-M."/>
            <person name="Kaerst U."/>
            <person name="Kreft J."/>
            <person name="Kuhn M."/>
            <person name="Kunst F."/>
            <person name="Kurapkat G."/>
            <person name="Madueno E."/>
            <person name="Maitournam A."/>
            <person name="Mata Vicente J."/>
            <person name="Ng E."/>
            <person name="Nedjari H."/>
            <person name="Nordsiek G."/>
            <person name="Novella S."/>
            <person name="de Pablos B."/>
            <person name="Perez-Diaz J.-C."/>
            <person name="Purcell R."/>
            <person name="Remmel B."/>
            <person name="Rose M."/>
            <person name="Schlueter T."/>
            <person name="Simoes N."/>
            <person name="Tierrez A."/>
            <person name="Vazquez-Boland J.-A."/>
            <person name="Voss H."/>
            <person name="Wehland J."/>
            <person name="Cossart P."/>
        </authorList>
    </citation>
    <scope>NUCLEOTIDE SEQUENCE [LARGE SCALE GENOMIC DNA]</scope>
    <source>
        <strain>ATCC BAA-680 / CLIP 11262</strain>
    </source>
</reference>
<feature type="chain" id="PRO_0000122746" description="Protein RecA">
    <location>
        <begin position="1"/>
        <end position="348"/>
    </location>
</feature>
<feature type="region of interest" description="Disordered" evidence="2">
    <location>
        <begin position="326"/>
        <end position="348"/>
    </location>
</feature>
<feature type="compositionally biased region" description="Basic and acidic residues" evidence="2">
    <location>
        <begin position="326"/>
        <end position="335"/>
    </location>
</feature>
<feature type="compositionally biased region" description="Acidic residues" evidence="2">
    <location>
        <begin position="336"/>
        <end position="348"/>
    </location>
</feature>
<feature type="binding site" evidence="1">
    <location>
        <begin position="64"/>
        <end position="71"/>
    </location>
    <ligand>
        <name>ATP</name>
        <dbReference type="ChEBI" id="CHEBI:30616"/>
    </ligand>
</feature>
<organism>
    <name type="scientific">Listeria innocua serovar 6a (strain ATCC BAA-680 / CLIP 11262)</name>
    <dbReference type="NCBI Taxonomy" id="272626"/>
    <lineage>
        <taxon>Bacteria</taxon>
        <taxon>Bacillati</taxon>
        <taxon>Bacillota</taxon>
        <taxon>Bacilli</taxon>
        <taxon>Bacillales</taxon>
        <taxon>Listeriaceae</taxon>
        <taxon>Listeria</taxon>
    </lineage>
</organism>
<sequence length="348" mass="38021">MNDRQAALDQALKQIEKQFGKGSIMKLGEHSDQNISTISSGSLALDIALGVGGYPRGRIIEVYGPESSGKTTVALHAIAEVQAQGGTAAFIDAEHALDPAYAKNLGVNIDELLLSQPDTGEQALEIAEALVRSGAVDMLVIDSVAALVPRAEIEGEMGDAHVGLQARLMSQALRKLSGVINKSKTIAIFINQIREKVGVMFGNPEITPGGRALKFYSTVRLEVRRAEQLKQGTDVMGNKTKIKVVKNKVAPPFRIAEVDIMYGEGISREGELVDMAAEVDVINKSGSWYSYKEERIGQGRENAKQYLKEHTDIRDEISKRVREEYEIDGTNKEPLDENEETLSLLDDE</sequence>
<keyword id="KW-0067">ATP-binding</keyword>
<keyword id="KW-0963">Cytoplasm</keyword>
<keyword id="KW-0227">DNA damage</keyword>
<keyword id="KW-0233">DNA recombination</keyword>
<keyword id="KW-0234">DNA repair</keyword>
<keyword id="KW-0238">DNA-binding</keyword>
<keyword id="KW-0547">Nucleotide-binding</keyword>
<keyword id="KW-0742">SOS response</keyword>
<protein>
    <recommendedName>
        <fullName evidence="1">Protein RecA</fullName>
    </recommendedName>
    <alternativeName>
        <fullName evidence="1">Recombinase A</fullName>
    </alternativeName>
</protein>
<dbReference type="EMBL" id="AL596168">
    <property type="protein sequence ID" value="CAC96666.1"/>
    <property type="molecule type" value="Genomic_DNA"/>
</dbReference>
<dbReference type="PIR" id="AB1612">
    <property type="entry name" value="AB1612"/>
</dbReference>
<dbReference type="RefSeq" id="WP_003766841.1">
    <property type="nucleotide sequence ID" value="NC_003212.1"/>
</dbReference>
<dbReference type="SMR" id="Q92BV7"/>
<dbReference type="STRING" id="272626.gene:17565766"/>
<dbReference type="GeneID" id="93234816"/>
<dbReference type="KEGG" id="lin:recA"/>
<dbReference type="eggNOG" id="COG0468">
    <property type="taxonomic scope" value="Bacteria"/>
</dbReference>
<dbReference type="HOGENOM" id="CLU_040469_3_2_9"/>
<dbReference type="OrthoDB" id="9776733at2"/>
<dbReference type="Proteomes" id="UP000002513">
    <property type="component" value="Chromosome"/>
</dbReference>
<dbReference type="GO" id="GO:0005829">
    <property type="term" value="C:cytosol"/>
    <property type="evidence" value="ECO:0007669"/>
    <property type="project" value="TreeGrafter"/>
</dbReference>
<dbReference type="GO" id="GO:0005524">
    <property type="term" value="F:ATP binding"/>
    <property type="evidence" value="ECO:0007669"/>
    <property type="project" value="UniProtKB-UniRule"/>
</dbReference>
<dbReference type="GO" id="GO:0016887">
    <property type="term" value="F:ATP hydrolysis activity"/>
    <property type="evidence" value="ECO:0007669"/>
    <property type="project" value="InterPro"/>
</dbReference>
<dbReference type="GO" id="GO:0140664">
    <property type="term" value="F:ATP-dependent DNA damage sensor activity"/>
    <property type="evidence" value="ECO:0007669"/>
    <property type="project" value="InterPro"/>
</dbReference>
<dbReference type="GO" id="GO:0003684">
    <property type="term" value="F:damaged DNA binding"/>
    <property type="evidence" value="ECO:0007669"/>
    <property type="project" value="UniProtKB-UniRule"/>
</dbReference>
<dbReference type="GO" id="GO:0003697">
    <property type="term" value="F:single-stranded DNA binding"/>
    <property type="evidence" value="ECO:0007669"/>
    <property type="project" value="UniProtKB-UniRule"/>
</dbReference>
<dbReference type="GO" id="GO:0006310">
    <property type="term" value="P:DNA recombination"/>
    <property type="evidence" value="ECO:0007669"/>
    <property type="project" value="UniProtKB-UniRule"/>
</dbReference>
<dbReference type="GO" id="GO:0006281">
    <property type="term" value="P:DNA repair"/>
    <property type="evidence" value="ECO:0007669"/>
    <property type="project" value="UniProtKB-UniRule"/>
</dbReference>
<dbReference type="GO" id="GO:0009432">
    <property type="term" value="P:SOS response"/>
    <property type="evidence" value="ECO:0007669"/>
    <property type="project" value="UniProtKB-UniRule"/>
</dbReference>
<dbReference type="CDD" id="cd00983">
    <property type="entry name" value="RecA"/>
    <property type="match status" value="1"/>
</dbReference>
<dbReference type="FunFam" id="3.40.50.300:FF:000087">
    <property type="entry name" value="Recombinase RecA"/>
    <property type="match status" value="1"/>
</dbReference>
<dbReference type="Gene3D" id="3.40.50.300">
    <property type="entry name" value="P-loop containing nucleotide triphosphate hydrolases"/>
    <property type="match status" value="1"/>
</dbReference>
<dbReference type="HAMAP" id="MF_00268">
    <property type="entry name" value="RecA"/>
    <property type="match status" value="1"/>
</dbReference>
<dbReference type="InterPro" id="IPR003593">
    <property type="entry name" value="AAA+_ATPase"/>
</dbReference>
<dbReference type="InterPro" id="IPR013765">
    <property type="entry name" value="DNA_recomb/repair_RecA"/>
</dbReference>
<dbReference type="InterPro" id="IPR020584">
    <property type="entry name" value="DNA_recomb/repair_RecA_CS"/>
</dbReference>
<dbReference type="InterPro" id="IPR027417">
    <property type="entry name" value="P-loop_NTPase"/>
</dbReference>
<dbReference type="InterPro" id="IPR049261">
    <property type="entry name" value="RecA-like_C"/>
</dbReference>
<dbReference type="InterPro" id="IPR049428">
    <property type="entry name" value="RecA-like_N"/>
</dbReference>
<dbReference type="InterPro" id="IPR020588">
    <property type="entry name" value="RecA_ATP-bd"/>
</dbReference>
<dbReference type="InterPro" id="IPR023400">
    <property type="entry name" value="RecA_C_sf"/>
</dbReference>
<dbReference type="InterPro" id="IPR020587">
    <property type="entry name" value="RecA_monomer-monomer_interface"/>
</dbReference>
<dbReference type="NCBIfam" id="TIGR02012">
    <property type="entry name" value="tigrfam_recA"/>
    <property type="match status" value="1"/>
</dbReference>
<dbReference type="PANTHER" id="PTHR45900:SF1">
    <property type="entry name" value="MITOCHONDRIAL DNA REPAIR PROTEIN RECA HOMOLOG-RELATED"/>
    <property type="match status" value="1"/>
</dbReference>
<dbReference type="PANTHER" id="PTHR45900">
    <property type="entry name" value="RECA"/>
    <property type="match status" value="1"/>
</dbReference>
<dbReference type="Pfam" id="PF00154">
    <property type="entry name" value="RecA"/>
    <property type="match status" value="1"/>
</dbReference>
<dbReference type="Pfam" id="PF21096">
    <property type="entry name" value="RecA_C"/>
    <property type="match status" value="1"/>
</dbReference>
<dbReference type="PRINTS" id="PR00142">
    <property type="entry name" value="RECA"/>
</dbReference>
<dbReference type="SMART" id="SM00382">
    <property type="entry name" value="AAA"/>
    <property type="match status" value="1"/>
</dbReference>
<dbReference type="SUPFAM" id="SSF52540">
    <property type="entry name" value="P-loop containing nucleoside triphosphate hydrolases"/>
    <property type="match status" value="1"/>
</dbReference>
<dbReference type="SUPFAM" id="SSF54752">
    <property type="entry name" value="RecA protein, C-terminal domain"/>
    <property type="match status" value="1"/>
</dbReference>
<dbReference type="PROSITE" id="PS00321">
    <property type="entry name" value="RECA_1"/>
    <property type="match status" value="1"/>
</dbReference>
<dbReference type="PROSITE" id="PS50162">
    <property type="entry name" value="RECA_2"/>
    <property type="match status" value="1"/>
</dbReference>
<dbReference type="PROSITE" id="PS50163">
    <property type="entry name" value="RECA_3"/>
    <property type="match status" value="1"/>
</dbReference>
<accession>Q92BV7</accession>
<evidence type="ECO:0000255" key="1">
    <source>
        <dbReference type="HAMAP-Rule" id="MF_00268"/>
    </source>
</evidence>
<evidence type="ECO:0000256" key="2">
    <source>
        <dbReference type="SAM" id="MobiDB-lite"/>
    </source>
</evidence>
<proteinExistence type="inferred from homology"/>
<name>RECA_LISIN</name>